<comment type="subcellular location">
    <subcellularLocation>
        <location evidence="1">Cell inner membrane</location>
        <topology evidence="1">Multi-pass membrane protein</topology>
    </subcellularLocation>
</comment>
<comment type="similarity">
    <text evidence="1">Belongs to the universal stress protein B family.</text>
</comment>
<name>USPB_PHOLL</name>
<reference key="1">
    <citation type="journal article" date="2003" name="Nat. Biotechnol.">
        <title>The genome sequence of the entomopathogenic bacterium Photorhabdus luminescens.</title>
        <authorList>
            <person name="Duchaud E."/>
            <person name="Rusniok C."/>
            <person name="Frangeul L."/>
            <person name="Buchrieser C."/>
            <person name="Givaudan A."/>
            <person name="Taourit S."/>
            <person name="Bocs S."/>
            <person name="Boursaux-Eude C."/>
            <person name="Chandler M."/>
            <person name="Charles J.-F."/>
            <person name="Dassa E."/>
            <person name="Derose R."/>
            <person name="Derzelle S."/>
            <person name="Freyssinet G."/>
            <person name="Gaudriault S."/>
            <person name="Medigue C."/>
            <person name="Lanois A."/>
            <person name="Powell K."/>
            <person name="Siguier P."/>
            <person name="Vincent R."/>
            <person name="Wingate V."/>
            <person name="Zouine M."/>
            <person name="Glaser P."/>
            <person name="Boemare N."/>
            <person name="Danchin A."/>
            <person name="Kunst F."/>
        </authorList>
    </citation>
    <scope>NUCLEOTIDE SEQUENCE [LARGE SCALE GENOMIC DNA]</scope>
    <source>
        <strain>DSM 15139 / CIP 105565 / TT01</strain>
    </source>
</reference>
<protein>
    <recommendedName>
        <fullName evidence="1">Universal stress protein B</fullName>
    </recommendedName>
</protein>
<feature type="chain" id="PRO_0000212044" description="Universal stress protein B">
    <location>
        <begin position="1"/>
        <end position="111"/>
    </location>
</feature>
<feature type="transmembrane region" description="Helical" evidence="1">
    <location>
        <begin position="1"/>
        <end position="21"/>
    </location>
</feature>
<feature type="transmembrane region" description="Helical" evidence="1">
    <location>
        <begin position="90"/>
        <end position="110"/>
    </location>
</feature>
<gene>
    <name evidence="1" type="primary">uspB</name>
    <name type="ordered locus">plu0120</name>
</gene>
<sequence length="111" mass="12975">MFSTIALFWALCLVCIINMMRYFSSLRALLSILRQSDPLLYQSVDGNGFFTTHGQLNKQIRLVNYINSQRYLDHHDPEVVLRCERLRKQFILTSSLSGLVVICLISMLIWY</sequence>
<dbReference type="EMBL" id="BX571859">
    <property type="protein sequence ID" value="CAE12415.1"/>
    <property type="molecule type" value="Genomic_DNA"/>
</dbReference>
<dbReference type="RefSeq" id="WP_011144526.1">
    <property type="nucleotide sequence ID" value="NC_005126.1"/>
</dbReference>
<dbReference type="STRING" id="243265.plu0120"/>
<dbReference type="GeneID" id="48846422"/>
<dbReference type="KEGG" id="plu:plu0120"/>
<dbReference type="eggNOG" id="ENOG502ZP3V">
    <property type="taxonomic scope" value="Bacteria"/>
</dbReference>
<dbReference type="HOGENOM" id="CLU_151816_0_0_6"/>
<dbReference type="OrthoDB" id="6432605at2"/>
<dbReference type="Proteomes" id="UP000002514">
    <property type="component" value="Chromosome"/>
</dbReference>
<dbReference type="GO" id="GO:0005886">
    <property type="term" value="C:plasma membrane"/>
    <property type="evidence" value="ECO:0007669"/>
    <property type="project" value="UniProtKB-SubCell"/>
</dbReference>
<dbReference type="HAMAP" id="MF_01088">
    <property type="entry name" value="UspB"/>
    <property type="match status" value="1"/>
</dbReference>
<dbReference type="InterPro" id="IPR019598">
    <property type="entry name" value="Universal_stress_protein_B"/>
</dbReference>
<dbReference type="NCBIfam" id="NF003435">
    <property type="entry name" value="PRK04960.1"/>
    <property type="match status" value="1"/>
</dbReference>
<dbReference type="Pfam" id="PF10625">
    <property type="entry name" value="UspB"/>
    <property type="match status" value="1"/>
</dbReference>
<proteinExistence type="inferred from homology"/>
<evidence type="ECO:0000255" key="1">
    <source>
        <dbReference type="HAMAP-Rule" id="MF_01088"/>
    </source>
</evidence>
<accession>P59988</accession>
<keyword id="KW-0997">Cell inner membrane</keyword>
<keyword id="KW-1003">Cell membrane</keyword>
<keyword id="KW-0472">Membrane</keyword>
<keyword id="KW-1185">Reference proteome</keyword>
<keyword id="KW-0812">Transmembrane</keyword>
<keyword id="KW-1133">Transmembrane helix</keyword>
<organism>
    <name type="scientific">Photorhabdus laumondii subsp. laumondii (strain DSM 15139 / CIP 105565 / TT01)</name>
    <name type="common">Photorhabdus luminescens subsp. laumondii</name>
    <dbReference type="NCBI Taxonomy" id="243265"/>
    <lineage>
        <taxon>Bacteria</taxon>
        <taxon>Pseudomonadati</taxon>
        <taxon>Pseudomonadota</taxon>
        <taxon>Gammaproteobacteria</taxon>
        <taxon>Enterobacterales</taxon>
        <taxon>Morganellaceae</taxon>
        <taxon>Photorhabdus</taxon>
    </lineage>
</organism>